<comment type="function">
    <text evidence="2 9 11 12 15">Involved in transcriptional regulation and chromatin remodeling. Facilitates DNA replication in multiple cellular environments and is required for efficient replication of a subset of genomic loci. Binds to DNA tandem repeat sequences in both telomeres and euchromatin and in vitro binds DNA quadruplex structures. May help stabilizing G-rich regions into regular chromatin structures by remodeling G4 DNA and incorporating H3.3-containing nucleosomes. Catalytic component of the chromatin remodeling complex ATRX:DAXX which has ATP-dependent DNA translocase activity and catalyzes the replication-independent deposition of histone H3.3 in pericentric DNA repeats outside S-phase and telomeres, and the in vitro remodeling of H3.3-containing nucleosomes. Its heterochromatin targeting is proposed to involve a combinatorial readout of histone H3 modifications (specifically methylation states of H3K9 and H3K4) and association with CBX5. Involved in maintaining telomere structural integrity in embryonic stem cells probably implying recruitment of CBX5 to telomeres. Reports on the involvement in transcriptional regulation of telomeric repeat-containing RNA (TERRA) are conflicting; according (PubMed:20211137) is required for its transcriptional repression in embryonic stem cells. Acts as a negative regulator of chromatin incorporation of transcriptionally repressive histone MACROH2A1, particularily at telomeres. Participates in the allele-specific gene expression at the imprinted IGF2/H19 gene locus. On the maternal allele, required for the chromatin occupancy of SMC1 and CTCTF within the H19 imprinting control region (ICR) and involved in esatblishment of histone tails modifications in the ICR. Binds to zinc-finger coding genes with atypical chromatin signatures and regulates its H3K9me3 levels. Forms a complex with ZNF274, TRIM28 and SETDB1 to facilitate the deposition and maintenance of H3K9me3 at the 3' exons of zinc-finger genes (By similarity).</text>
</comment>
<comment type="catalytic activity">
    <reaction>
        <text>ATP + H2O = ADP + phosphate + H(+)</text>
        <dbReference type="Rhea" id="RHEA:13065"/>
        <dbReference type="ChEBI" id="CHEBI:15377"/>
        <dbReference type="ChEBI" id="CHEBI:15378"/>
        <dbReference type="ChEBI" id="CHEBI:30616"/>
        <dbReference type="ChEBI" id="CHEBI:43474"/>
        <dbReference type="ChEBI" id="CHEBI:456216"/>
        <dbReference type="EC" id="3.6.4.12"/>
    </reaction>
</comment>
<comment type="subunit">
    <text evidence="2 8 9 10 15">Interacts with DAXX to form the chromatin remodeling complex ATRX:DAXX. Probably binds EZH2. Binds annexin V in a calcium and phosphatidylcholine/phosphatidylserine-dependent manner. Interacts directly with CBX5 via the PxVxL motif. Interacts with RAD50, MRE11 and NBN; indicative for an association with the MRN complex. Interacts with histone MACROH2A1. Interacts with histone H3 peptides methylated at 'Lys-10' with preferences H3K9me3 &gt; H3K9me2 &gt; H3K9me1. Interacts with histone H3 peptides unmethylated at 'Lys-5' (H3K4me0). Interacts with MECP2, SMC1 and SMC3. Interacts with SETDB1, TRIM28 and ZNF274 (By similarity).</text>
</comment>
<comment type="interaction">
    <interactant intactId="EBI-2657527">
        <id>Q61687</id>
    </interactant>
    <interactant intactId="EBI-1188816">
        <id>Q9Z2D6</id>
        <label>Mecp2</label>
    </interactant>
    <organismsDiffer>false</organismsDiffer>
    <experiments>5</experiments>
</comment>
<comment type="interaction">
    <interactant intactId="EBI-2657527">
        <id>Q61687</id>
    </interactant>
    <interactant intactId="EBI-2550016">
        <id>Q9CU62</id>
        <label>Smc1a</label>
    </interactant>
    <organismsDiffer>false</organismsDiffer>
    <experiments>4</experiments>
</comment>
<comment type="subcellular location">
    <subcellularLocation>
        <location>Nucleus</location>
    </subcellularLocation>
    <subcellularLocation>
        <location>Chromosome</location>
        <location>Telomere</location>
    </subcellularLocation>
    <subcellularLocation>
        <location evidence="1">Nucleus</location>
        <location evidence="1">PML body</location>
    </subcellularLocation>
    <text evidence="1">Associated with pericentromeric heterochromatin during interphase and mitosis, probably by interacting with CBX5/HP1 alpha. Colocalizes with histone H3.3, DAXX, HIRA and ASF1A at PML-nuclear bodies (By similarity). In embryonic stem cells localized to telomeres; localization is reduced after 12 d of induction of cell differentiation. Colocalizes with cohesin (SMC1 and SMC3) and MECP2 at the maternal H19 ICR and the Gtl2/Dlk1 imprinted cluster in the brain.</text>
</comment>
<comment type="domain">
    <text evidence="1">The ADD domain predominantly interacts with histone H3 trimethylated at 'Lys-10'(H3K9me3) (and to a lesser extent H3 mono- or dimethylated at 'Lys-10') and simultaneously to histone H3 unmethylated at 'Lys-5' (H3K4me0). The interaction with H3K9me3 is disrupted by the presence of H3K4me3 suggesting a readout of the combined histone H3 methylation state (By similarity).</text>
</comment>
<comment type="domain">
    <text>Contains one Pro-Xaa-Val-Xaa-Leu (PxVxL) motif, which is required for interaction with chromoshadow domains. This motif requires additional residues -7, -6, +4 and +5 of the central Val which contact the chromoshadow domain.</text>
</comment>
<comment type="PTM">
    <text evidence="14">Citrullinated by PADI4.</text>
</comment>
<comment type="similarity">
    <text evidence="16">Belongs to the SNF2/RAD54 helicase family.</text>
</comment>
<feature type="chain" id="PRO_0000074303" description="Transcriptional regulator ATRX">
    <location>
        <begin position="1"/>
        <end position="2476"/>
    </location>
</feature>
<feature type="domain" description="ADD" evidence="6">
    <location>
        <begin position="158"/>
        <end position="295"/>
    </location>
</feature>
<feature type="domain" description="Helicase ATP-binding" evidence="4">
    <location>
        <begin position="1566"/>
        <end position="1753"/>
    </location>
</feature>
<feature type="domain" description="Helicase C-terminal" evidence="5">
    <location>
        <begin position="2008"/>
        <end position="2188"/>
    </location>
</feature>
<feature type="zinc finger region" description="GATA-type; atypical" evidence="6">
    <location>
        <begin position="169"/>
        <end position="205"/>
    </location>
</feature>
<feature type="zinc finger region" description="PHD-type; atypical" evidence="6">
    <location>
        <begin position="216"/>
        <end position="271"/>
    </location>
</feature>
<feature type="region of interest" description="Disordered" evidence="7">
    <location>
        <begin position="24"/>
        <end position="154"/>
    </location>
</feature>
<feature type="region of interest" description="Disordered" evidence="7">
    <location>
        <begin position="427"/>
        <end position="451"/>
    </location>
</feature>
<feature type="region of interest" description="Disordered" evidence="7">
    <location>
        <begin position="466"/>
        <end position="507"/>
    </location>
</feature>
<feature type="region of interest" description="Disordered" evidence="7">
    <location>
        <begin position="525"/>
        <end position="568"/>
    </location>
</feature>
<feature type="region of interest" description="Disordered" evidence="7">
    <location>
        <begin position="585"/>
        <end position="877"/>
    </location>
</feature>
<feature type="region of interest" description="Disordered" evidence="7">
    <location>
        <begin position="893"/>
        <end position="1464"/>
    </location>
</feature>
<feature type="region of interest" description="Interaction with DAXX" evidence="1">
    <location>
        <begin position="1169"/>
        <end position="1313"/>
    </location>
</feature>
<feature type="region of interest" description="Disordered" evidence="7">
    <location>
        <begin position="1898"/>
        <end position="1982"/>
    </location>
</feature>
<feature type="region of interest" description="Interaction with MECP2" evidence="1">
    <location>
        <begin position="1993"/>
        <end position="2263"/>
    </location>
</feature>
<feature type="region of interest" description="Disordered" evidence="7">
    <location>
        <begin position="2445"/>
        <end position="2476"/>
    </location>
</feature>
<feature type="short sequence motif" description="PxVxL motif">
    <location>
        <begin position="573"/>
        <end position="586"/>
    </location>
</feature>
<feature type="short sequence motif" description="DEGH box">
    <location>
        <begin position="1704"/>
        <end position="1707"/>
    </location>
</feature>
<feature type="compositionally biased region" description="Polar residues" evidence="7">
    <location>
        <begin position="40"/>
        <end position="57"/>
    </location>
</feature>
<feature type="compositionally biased region" description="Basic and acidic residues" evidence="7">
    <location>
        <begin position="58"/>
        <end position="72"/>
    </location>
</feature>
<feature type="compositionally biased region" description="Basic and acidic residues" evidence="7">
    <location>
        <begin position="98"/>
        <end position="107"/>
    </location>
</feature>
<feature type="compositionally biased region" description="Polar residues" evidence="7">
    <location>
        <begin position="108"/>
        <end position="121"/>
    </location>
</feature>
<feature type="compositionally biased region" description="Basic and acidic residues" evidence="7">
    <location>
        <begin position="134"/>
        <end position="154"/>
    </location>
</feature>
<feature type="compositionally biased region" description="Basic and acidic residues" evidence="7">
    <location>
        <begin position="466"/>
        <end position="494"/>
    </location>
</feature>
<feature type="compositionally biased region" description="Polar residues" evidence="7">
    <location>
        <begin position="549"/>
        <end position="559"/>
    </location>
</feature>
<feature type="compositionally biased region" description="Basic and acidic residues" evidence="7">
    <location>
        <begin position="615"/>
        <end position="630"/>
    </location>
</feature>
<feature type="compositionally biased region" description="Polar residues" evidence="7">
    <location>
        <begin position="732"/>
        <end position="746"/>
    </location>
</feature>
<feature type="compositionally biased region" description="Basic and acidic residues" evidence="7">
    <location>
        <begin position="819"/>
        <end position="849"/>
    </location>
</feature>
<feature type="compositionally biased region" description="Basic and acidic residues" evidence="7">
    <location>
        <begin position="899"/>
        <end position="922"/>
    </location>
</feature>
<feature type="compositionally biased region" description="Basic residues" evidence="7">
    <location>
        <begin position="923"/>
        <end position="937"/>
    </location>
</feature>
<feature type="compositionally biased region" description="Basic and acidic residues" evidence="7">
    <location>
        <begin position="943"/>
        <end position="963"/>
    </location>
</feature>
<feature type="compositionally biased region" description="Basic residues" evidence="7">
    <location>
        <begin position="964"/>
        <end position="973"/>
    </location>
</feature>
<feature type="compositionally biased region" description="Basic and acidic residues" evidence="7">
    <location>
        <begin position="974"/>
        <end position="988"/>
    </location>
</feature>
<feature type="compositionally biased region" description="Basic and acidic residues" evidence="7">
    <location>
        <begin position="1031"/>
        <end position="1061"/>
    </location>
</feature>
<feature type="compositionally biased region" description="Basic residues" evidence="7">
    <location>
        <begin position="1062"/>
        <end position="1074"/>
    </location>
</feature>
<feature type="compositionally biased region" description="Basic and acidic residues" evidence="7">
    <location>
        <begin position="1083"/>
        <end position="1096"/>
    </location>
</feature>
<feature type="compositionally biased region" description="Basic and acidic residues" evidence="7">
    <location>
        <begin position="1103"/>
        <end position="1129"/>
    </location>
</feature>
<feature type="compositionally biased region" description="Basic residues" evidence="7">
    <location>
        <begin position="1146"/>
        <end position="1175"/>
    </location>
</feature>
<feature type="compositionally biased region" description="Basic and acidic residues" evidence="7">
    <location>
        <begin position="1246"/>
        <end position="1260"/>
    </location>
</feature>
<feature type="compositionally biased region" description="Acidic residues" evidence="7">
    <location>
        <begin position="1265"/>
        <end position="1276"/>
    </location>
</feature>
<feature type="compositionally biased region" description="Basic residues" evidence="7">
    <location>
        <begin position="1321"/>
        <end position="1332"/>
    </location>
</feature>
<feature type="compositionally biased region" description="Basic and acidic residues" evidence="7">
    <location>
        <begin position="1340"/>
        <end position="1355"/>
    </location>
</feature>
<feature type="compositionally biased region" description="Basic and acidic residues" evidence="7">
    <location>
        <begin position="1395"/>
        <end position="1404"/>
    </location>
</feature>
<feature type="compositionally biased region" description="Basic residues" evidence="7">
    <location>
        <begin position="1406"/>
        <end position="1415"/>
    </location>
</feature>
<feature type="compositionally biased region" description="Basic and acidic residues" evidence="7">
    <location>
        <begin position="1416"/>
        <end position="1436"/>
    </location>
</feature>
<feature type="compositionally biased region" description="Acidic residues" evidence="7">
    <location>
        <begin position="1437"/>
        <end position="1453"/>
    </location>
</feature>
<feature type="compositionally biased region" description="Basic and acidic residues" evidence="7">
    <location>
        <begin position="1902"/>
        <end position="1913"/>
    </location>
</feature>
<feature type="compositionally biased region" description="Low complexity" evidence="7">
    <location>
        <begin position="1971"/>
        <end position="1982"/>
    </location>
</feature>
<feature type="compositionally biased region" description="Pro residues" evidence="7">
    <location>
        <begin position="2451"/>
        <end position="2462"/>
    </location>
</feature>
<feature type="binding site" evidence="4">
    <location>
        <begin position="1579"/>
        <end position="1586"/>
    </location>
    <ligand>
        <name>ATP</name>
        <dbReference type="ChEBI" id="CHEBI:30616"/>
    </ligand>
</feature>
<feature type="modified residue" description="Phosphoserine" evidence="2">
    <location>
        <position position="25"/>
    </location>
</feature>
<feature type="modified residue" description="Phosphoserine" evidence="2">
    <location>
        <position position="34"/>
    </location>
</feature>
<feature type="modified residue" description="Phosphotyrosine" evidence="17 20">
    <location>
        <position position="89"/>
    </location>
</feature>
<feature type="modified residue" description="Phosphoserine" evidence="18 19 20">
    <location>
        <position position="92"/>
    </location>
</feature>
<feature type="modified residue" description="Phosphoserine" evidence="2">
    <location>
        <position position="111"/>
    </location>
</feature>
<feature type="modified residue" description="Phosphoserine" evidence="20">
    <location>
        <position position="212"/>
    </location>
</feature>
<feature type="modified residue" description="Phosphoserine" evidence="20">
    <location>
        <position position="315"/>
    </location>
</feature>
<feature type="modified residue" description="Phosphothreonine" evidence="2">
    <location>
        <position position="583"/>
    </location>
</feature>
<feature type="modified residue" description="Phosphoserine" evidence="2">
    <location>
        <position position="586"/>
    </location>
</feature>
<feature type="modified residue" description="Phosphoserine" evidence="2">
    <location>
        <position position="590"/>
    </location>
</feature>
<feature type="modified residue" description="Phosphoserine" evidence="20">
    <location>
        <position position="626"/>
    </location>
</feature>
<feature type="modified residue" description="Phosphoserine" evidence="20">
    <location>
        <position position="663"/>
    </location>
</feature>
<feature type="modified residue" description="Phosphoserine" evidence="20">
    <location>
        <position position="665"/>
    </location>
</feature>
<feature type="modified residue" description="Phosphoserine" evidence="17 20">
    <location>
        <position position="717"/>
    </location>
</feature>
<feature type="modified residue" description="Phosphoserine" evidence="2">
    <location>
        <position position="719"/>
    </location>
</feature>
<feature type="modified residue" description="Phosphoserine" evidence="20">
    <location>
        <position position="766"/>
    </location>
</feature>
<feature type="modified residue" description="Phosphoserine" evidence="17 20">
    <location>
        <position position="801"/>
    </location>
</feature>
<feature type="modified residue" description="Phosphoserine" evidence="2">
    <location>
        <position position="828"/>
    </location>
</feature>
<feature type="modified residue" description="Phosphoserine" evidence="2">
    <location>
        <position position="829"/>
    </location>
</feature>
<feature type="modified residue" description="Phosphoserine" evidence="20">
    <location>
        <position position="854"/>
    </location>
</feature>
<feature type="modified residue" description="Phosphoserine" evidence="20">
    <location>
        <position position="855"/>
    </location>
</feature>
<feature type="modified residue" description="Phosphoserine" evidence="2">
    <location>
        <position position="871"/>
    </location>
</feature>
<feature type="modified residue" description="Phosphoserine" evidence="2">
    <location>
        <position position="941"/>
    </location>
</feature>
<feature type="modified residue" description="Phosphoserine" evidence="2">
    <location>
        <position position="953"/>
    </location>
</feature>
<feature type="modified residue" description="Phosphoserine" evidence="3">
    <location>
        <position position="991"/>
    </location>
</feature>
<feature type="modified residue" description="Phosphoserine" evidence="3">
    <location>
        <position position="992"/>
    </location>
</feature>
<feature type="modified residue" description="Phosphoserine" evidence="3">
    <location>
        <position position="993"/>
    </location>
</feature>
<feature type="modified residue" description="Phosphoserine" evidence="2">
    <location>
        <position position="1041"/>
    </location>
</feature>
<feature type="modified residue" description="Citrulline" evidence="14">
    <location>
        <position position="1063"/>
    </location>
</feature>
<feature type="modified residue" description="Phosphoserine" evidence="20">
    <location>
        <position position="1223"/>
    </location>
</feature>
<feature type="modified residue" description="Phosphoserine" evidence="20">
    <location>
        <position position="1224"/>
    </location>
</feature>
<feature type="modified residue" description="Phosphoserine" evidence="20">
    <location>
        <position position="1232"/>
    </location>
</feature>
<feature type="modified residue" description="Phosphoserine" evidence="2">
    <location>
        <position position="1309"/>
    </location>
</feature>
<feature type="modified residue" description="Phosphoserine" evidence="2">
    <location>
        <position position="1311"/>
    </location>
</feature>
<feature type="modified residue" description="Phosphoserine" evidence="2">
    <location>
        <position position="1313"/>
    </location>
</feature>
<feature type="modified residue" description="Phosphoserine" evidence="2">
    <location>
        <position position="1335"/>
    </location>
</feature>
<feature type="modified residue" description="Phosphoserine" evidence="17 20">
    <location>
        <position position="1339"/>
    </location>
</feature>
<feature type="modified residue" description="Phosphoserine" evidence="2">
    <location>
        <position position="1512"/>
    </location>
</feature>
<feature type="modified residue" description="Phosphothreonine" evidence="2">
    <location>
        <position position="1514"/>
    </location>
</feature>
<feature type="modified residue" description="Phosphoserine" evidence="20">
    <location>
        <position position="1891"/>
    </location>
</feature>
<feature type="modified residue" description="Phosphoserine" evidence="20">
    <location>
        <position position="1898"/>
    </location>
</feature>
<feature type="modified residue" description="Phosphoserine" evidence="20">
    <location>
        <position position="1975"/>
    </location>
</feature>
<feature type="modified residue" description="Phosphoserine" evidence="20">
    <location>
        <position position="1979"/>
    </location>
</feature>
<feature type="modified residue" description="Phosphoserine" evidence="2">
    <location>
        <position position="2203"/>
    </location>
</feature>
<feature type="modified residue" description="Omega-N-methylarginine" evidence="21">
    <location>
        <position position="2457"/>
    </location>
</feature>
<feature type="modified residue" description="Omega-N-methylarginine" evidence="21">
    <location>
        <position position="2464"/>
    </location>
</feature>
<feature type="cross-link" description="Glycyl lysine isopeptide (Lys-Gly) (interchain with G-Cter in SUMO2)" evidence="2">
    <location>
        <position position="10"/>
    </location>
</feature>
<feature type="cross-link" description="Glycyl lysine isopeptide (Lys-Gly) (interchain with G-Cter in SUMO2)" evidence="2">
    <location>
        <position position="137"/>
    </location>
</feature>
<feature type="cross-link" description="Glycyl lysine isopeptide (Lys-Gly) (interchain with G-Cter in SUMO2)" evidence="2">
    <location>
        <position position="141"/>
    </location>
</feature>
<feature type="cross-link" description="Glycyl lysine isopeptide (Lys-Gly) (interchain with G-Cter in SUMO2)" evidence="2">
    <location>
        <position position="298"/>
    </location>
</feature>
<feature type="cross-link" description="Glycyl lysine isopeptide (Lys-Gly) (interchain with G-Cter in SUMO2)" evidence="2">
    <location>
        <position position="439"/>
    </location>
</feature>
<feature type="cross-link" description="Glycyl lysine isopeptide (Lys-Gly) (interchain with G-Cter in SUMO2)" evidence="2">
    <location>
        <position position="984"/>
    </location>
</feature>
<feature type="cross-link" description="Glycyl lysine isopeptide (Lys-Gly) (interchain with G-Cter in SUMO2)" evidence="2">
    <location>
        <position position="1473"/>
    </location>
</feature>
<feature type="cross-link" description="Glycyl lysine isopeptide (Lys-Gly) (interchain with G-Cter in SUMO1); alternate" evidence="2">
    <location>
        <position position="1965"/>
    </location>
</feature>
<feature type="cross-link" description="Glycyl lysine isopeptide (Lys-Gly) (interchain with G-Cter in SUMO2); alternate" evidence="2">
    <location>
        <position position="1965"/>
    </location>
</feature>
<feature type="cross-link" description="Glycyl lysine isopeptide (Lys-Gly) (interchain with G-Cter in SUMO2)" evidence="2">
    <location>
        <position position="1970"/>
    </location>
</feature>
<feature type="mutagenesis site" description="Reduces pericentromeric localization. Abolishes pericentromeric localization; when associated with E-580." evidence="13">
    <original>C</original>
    <variation>G</variation>
    <location>
        <position position="239"/>
    </location>
</feature>
<feature type="mutagenesis site" description="Reduces pericentromeric localization. Abolishes pericentromeric localization; when associated with G-239." evidence="13">
    <original>V</original>
    <variation>E</variation>
    <location>
        <position position="580"/>
    </location>
</feature>
<feature type="sequence conflict" description="In Ref. 1; AAC08741." evidence="16" ref="1">
    <original>K</original>
    <variation>I</variation>
    <location>
        <position position="157"/>
    </location>
</feature>
<feature type="sequence conflict" description="In Ref. 1; AAC08741." evidence="16" ref="1">
    <original>V</original>
    <variation>M</variation>
    <location>
        <position position="1953"/>
    </location>
</feature>
<accession>Q61687</accession>
<accession>A2ADH4</accession>
<protein>
    <recommendedName>
        <fullName>Transcriptional regulator ATRX</fullName>
        <ecNumber>3.6.4.12</ecNumber>
    </recommendedName>
    <alternativeName>
        <fullName>ATP-dependent helicase ATRX</fullName>
    </alternativeName>
    <alternativeName>
        <fullName>HP1 alpha-interacting protein</fullName>
    </alternativeName>
    <alternativeName>
        <fullName>HP1-BP38 protein</fullName>
    </alternativeName>
    <alternativeName>
        <fullName>Heterochromatin protein 2</fullName>
    </alternativeName>
    <alternativeName>
        <fullName>X-linked nuclear protein</fullName>
    </alternativeName>
</protein>
<keyword id="KW-0067">ATP-binding</keyword>
<keyword id="KW-0156">Chromatin regulator</keyword>
<keyword id="KW-0158">Chromosome</keyword>
<keyword id="KW-0164">Citrullination</keyword>
<keyword id="KW-0227">DNA damage</keyword>
<keyword id="KW-0234">DNA repair</keyword>
<keyword id="KW-0238">DNA-binding</keyword>
<keyword id="KW-0347">Helicase</keyword>
<keyword id="KW-0378">Hydrolase</keyword>
<keyword id="KW-1017">Isopeptide bond</keyword>
<keyword id="KW-0479">Metal-binding</keyword>
<keyword id="KW-0488">Methylation</keyword>
<keyword id="KW-0547">Nucleotide-binding</keyword>
<keyword id="KW-0539">Nucleus</keyword>
<keyword id="KW-0597">Phosphoprotein</keyword>
<keyword id="KW-1185">Reference proteome</keyword>
<keyword id="KW-0779">Telomere</keyword>
<keyword id="KW-0804">Transcription</keyword>
<keyword id="KW-0805">Transcription regulation</keyword>
<keyword id="KW-0832">Ubl conjugation</keyword>
<keyword id="KW-0862">Zinc</keyword>
<keyword id="KW-0863">Zinc-finger</keyword>
<sequence>MTAEPMSGNKLSTLVQKLHDFLAHSSEESEETCSSPRLVMNQSTDKICGSGLNSDMMENNKEEGASTSEKSRSSGSSRSKRKPSIVTKYVESDDEKPTDENVNEKAATENSENDITMQSLPKGTVIVQPEPVLNEDKDDFKGPEFRSRSKMKADNLKKRGEDGLHGIVSCTACGQQVNHFQKDSIYRHPSLKVLICKNCFKYYMSDDISRDSDGMDEQCRWCAEGGNLICCDFCHNAFCKKCILRNLGRKELSTIMDENNQWYCYICQPEPLLDLVTACNSVFENLEQLLQQNKKKIKVDSEKTSKVCDQTSKFSPKKSSSSCNGEEKKLEESCSGSVSSTYSHSALSVPKEMIKKTTKLIETTSNMNSSYIKFLKQAADNSEMTSAMKLCQLKSFKSVLDDIKKAHLALEEDLNSEIQALDDVHKEKNTKDLKSTDAKSETKLGKGEKSYSTEKREFLKLDARSSVKAIDGEEQRAHKSTSGEHKGSGRKDGSQYEPTNTPEDLDMDIVSVPSSVPEDIFDSLESAMEVQSSADYQGDGNSGTEPELESSSVKLNVSSKDSRGNIKSKVTAKVRKELFVKLTPVSLSNSPIKGVDCQEVSQEKNGRKSSGVARSSEKCRPREEISDHENNVTILLEDSDLRRSPRVKTTPLRRQTESNPAMSNSDEESNGTMKEKQKMSGPIRKKDKRNSADCATDNPKPHKVPKAKQPVIGDQNSDSDEMLAVLKEASQMGHSSSSDTDINEPQMNHKGKTGKDDNGKRKRKNSTSGSDFDTKKGKSTETSIISKKKRQNYSESSNYDSELEREIKTMSRIGAARKSVPEKKEEDSSEDEKQGKKVVDNGGHERAKTTQEGSSADDTGDTEGRQGGSCSIAGGSIEKVRSGVEFREMLCKPGVSSDGAEKPSVKEENVNSPEDKRVSKTKEKTKHLRSRQSRKGKGGSSDGTDRFPKKEQSDESSEGEKKQSRQRPGTKGKKAPDLKGETLKREQEWDSSSDGTERLPEEEEIGPFSKGIKQSKTDTAGGEKKGKKWKDKSCEKKEELSDSVDKLPGKGDSCDSSEDKKTRNRVSLREKKRFSLPAKSPGKRPECSSSDTEKSLKGQCCDSTEKRPKRIDLRERRNSSSKRNTKEVKSASSSSDAEGSSEDNKKQKKQRTSAKKKTGNTKEKKRNSLRATPKRKQVDITSSSSDIGDDDQNSAGEESSDEQKIKPVTENLVLPSHTGFCQSSGDEALSKSVPATVDDDDDDNDPENRIAKKMLLEEIKANLSSDEDGSSDDEPDGGGKKRIGKQSEESPADDGELRREQLAVNQVNSESDSDSEESKKPRYRHRLLRHKLTLSDGESGEEKPTKPKEHKEAKGRNRRKVSSEDSEDTDFQESGVSEEVSESEDEQRPRTRSAKKAELEENQRSYKQKKKRRRIKVQEDSSSENKSHSEEDKKEGDEEDEEDEDEDEEDENDDSKSPGKGRKKIRKILKDDKLRTETQNALKEEEERRKRIAEREREREKLREVIEIEDASPTKCPITTKLVLDENEETKEPLVQVHRNMVIKLKPHQVDGVQFMWDCCCESVEKTKKSPGSGCILAHCMGLGKTLQVVSFLHTVLLCDKLDFSTALVVCPLNTALNWMNEFEKWQEGLNDNEKLEVSELATVKRPQERSYMLQRWQEDGGVMIIGYEMYRNLAQGRNVKSRKLKDIFNKALVDPGPDFVVCDEGHILKNEASAVSKAMNSIKSRRRIILTGTPLQNNLIEYHCMVNFIKENLLGSIKEFRNRFINPIQNGQCADSTMVDVRVMKKRAHILYEMLAGCVQRKDYTALTKFLPPKHEYVLAVRMTAIQCKLYQYYLDHLTGVGNSTEGGRGKAGAKLFQDFQMLSRIWTHPWCLQLDYISKENKGYFDEDSMDEFIASDSDETSKSLSSDEKKKPKGKKGKKDSSSSGSGSDNDVEVIKVWNSRSRGGGDGNVDDTGNNPSVSLKLDESKTTSTSNPSSPAPDWYKDFVTDTDAEVLEHSGKMVLLFEILRMAEEIGDKVLVFSQSLISLDLIEDFLELASREKTEDKEKPLIYKGEGKWIRNIDYYRLDGSTNAQSRKKWAEEFNDETNVRGRLFIISTKAGSLGINLVAANRVIIFDASWNPSYDIQSIFRVYRFGQTKPVYVYRFLAQGTMEDKIYDRQVTKQSLSFRVVDQQQVERHFTMNELTELYTFEPDLLDDPNSEKKKKRDTPMLPKDTILAELLQIHKEHIVGYHEHDSLLDHKEEEELTEEERKAAWAEYEAEKKGLTMRFNIPTGTNLPPVTFTSQTPYIPFNLGALSAMSNQQLEDLINQGREKVVEATNSMTAVRIQPLEDIISTVWKENMNLSEAQVQALALSRQASQELDVKRREAIYNDVLTKQQMLINCVQRILMNRRLQQQYTQQQQQQLTYQQATLSHLMMPKPPNLIMTPSNYQQIDMRGMYQSVAGGMQPPPLQRAPPPTVRSKNPGPSPGKSM</sequence>
<proteinExistence type="evidence at protein level"/>
<evidence type="ECO:0000250" key="1"/>
<evidence type="ECO:0000250" key="2">
    <source>
        <dbReference type="UniProtKB" id="P46100"/>
    </source>
</evidence>
<evidence type="ECO:0000250" key="3">
    <source>
        <dbReference type="UniProtKB" id="P70486"/>
    </source>
</evidence>
<evidence type="ECO:0000255" key="4">
    <source>
        <dbReference type="PROSITE-ProRule" id="PRU00541"/>
    </source>
</evidence>
<evidence type="ECO:0000255" key="5">
    <source>
        <dbReference type="PROSITE-ProRule" id="PRU00542"/>
    </source>
</evidence>
<evidence type="ECO:0000255" key="6">
    <source>
        <dbReference type="PROSITE-ProRule" id="PRU00865"/>
    </source>
</evidence>
<evidence type="ECO:0000256" key="7">
    <source>
        <dbReference type="SAM" id="MobiDB-lite"/>
    </source>
</evidence>
<evidence type="ECO:0000269" key="8">
    <source>
    </source>
</evidence>
<evidence type="ECO:0000269" key="9">
    <source>
    </source>
</evidence>
<evidence type="ECO:0000269" key="10">
    <source>
    </source>
</evidence>
<evidence type="ECO:0000269" key="11">
    <source>
    </source>
</evidence>
<evidence type="ECO:0000269" key="12">
    <source>
    </source>
</evidence>
<evidence type="ECO:0000269" key="13">
    <source>
    </source>
</evidence>
<evidence type="ECO:0000269" key="14">
    <source>
    </source>
</evidence>
<evidence type="ECO:0000269" key="15">
    <source>
    </source>
</evidence>
<evidence type="ECO:0000305" key="16"/>
<evidence type="ECO:0007744" key="17">
    <source>
    </source>
</evidence>
<evidence type="ECO:0007744" key="18">
    <source>
    </source>
</evidence>
<evidence type="ECO:0007744" key="19">
    <source>
    </source>
</evidence>
<evidence type="ECO:0007744" key="20">
    <source>
    </source>
</evidence>
<evidence type="ECO:0007744" key="21">
    <source>
    </source>
</evidence>
<gene>
    <name type="primary">Atrx</name>
    <name type="synonym">Hp1bp2</name>
    <name type="synonym">Xnp</name>
</gene>
<dbReference type="EC" id="3.6.4.12"/>
<dbReference type="EMBL" id="AF026032">
    <property type="protein sequence ID" value="AAC08741.1"/>
    <property type="molecule type" value="mRNA"/>
</dbReference>
<dbReference type="EMBL" id="AL670660">
    <property type="status" value="NOT_ANNOTATED_CDS"/>
    <property type="molecule type" value="Genomic_DNA"/>
</dbReference>
<dbReference type="EMBL" id="AL671893">
    <property type="status" value="NOT_ANNOTATED_CDS"/>
    <property type="molecule type" value="Genomic_DNA"/>
</dbReference>
<dbReference type="EMBL" id="X99643">
    <property type="protein sequence ID" value="CAA67962.1"/>
    <property type="molecule type" value="mRNA"/>
</dbReference>
<dbReference type="CCDS" id="CCDS41095.1"/>
<dbReference type="RefSeq" id="NP_033556.2">
    <property type="nucleotide sequence ID" value="NM_009530.2"/>
</dbReference>
<dbReference type="BMRB" id="Q61687"/>
<dbReference type="SMR" id="Q61687"/>
<dbReference type="BioGRID" id="204603">
    <property type="interactions" value="39"/>
</dbReference>
<dbReference type="DIP" id="DIP-55974N"/>
<dbReference type="FunCoup" id="Q61687">
    <property type="interactions" value="3275"/>
</dbReference>
<dbReference type="IntAct" id="Q61687">
    <property type="interactions" value="32"/>
</dbReference>
<dbReference type="MINT" id="Q61687"/>
<dbReference type="STRING" id="10090.ENSMUSP00000109203"/>
<dbReference type="ChEMBL" id="CHEMBL4879474"/>
<dbReference type="GlyGen" id="Q61687">
    <property type="glycosylation" value="4 sites, 2 N-linked glycans (2 sites), 1 O-linked glycan (2 sites)"/>
</dbReference>
<dbReference type="iPTMnet" id="Q61687"/>
<dbReference type="PhosphoSitePlus" id="Q61687"/>
<dbReference type="SwissPalm" id="Q61687"/>
<dbReference type="jPOST" id="Q61687"/>
<dbReference type="PaxDb" id="10090-ENSMUSP00000109203"/>
<dbReference type="PeptideAtlas" id="Q61687"/>
<dbReference type="ProteomicsDB" id="265183"/>
<dbReference type="Pumba" id="Q61687"/>
<dbReference type="Antibodypedia" id="460">
    <property type="antibodies" value="456 antibodies from 38 providers"/>
</dbReference>
<dbReference type="DNASU" id="22589"/>
<dbReference type="Ensembl" id="ENSMUST00000113573.8">
    <property type="protein sequence ID" value="ENSMUSP00000109203.2"/>
    <property type="gene ID" value="ENSMUSG00000031229.17"/>
</dbReference>
<dbReference type="GeneID" id="22589"/>
<dbReference type="KEGG" id="mmu:22589"/>
<dbReference type="UCSC" id="uc009ubb.2">
    <property type="organism name" value="mouse"/>
</dbReference>
<dbReference type="AGR" id="MGI:103067"/>
<dbReference type="CTD" id="546"/>
<dbReference type="MGI" id="MGI:103067">
    <property type="gene designation" value="Atrx"/>
</dbReference>
<dbReference type="VEuPathDB" id="HostDB:ENSMUSG00000031229"/>
<dbReference type="eggNOG" id="KOG1015">
    <property type="taxonomic scope" value="Eukaryota"/>
</dbReference>
<dbReference type="GeneTree" id="ENSGT00940000155902"/>
<dbReference type="HOGENOM" id="CLU_000863_1_0_1"/>
<dbReference type="InParanoid" id="Q61687"/>
<dbReference type="OMA" id="PPGLMMN"/>
<dbReference type="OrthoDB" id="2020972at2759"/>
<dbReference type="PhylomeDB" id="Q61687"/>
<dbReference type="TreeFam" id="TF313172"/>
<dbReference type="Reactome" id="R-MMU-9670095">
    <property type="pathway name" value="Inhibition of DNA recombination at telomere"/>
</dbReference>
<dbReference type="BioGRID-ORCS" id="22589">
    <property type="hits" value="10 hits in 123 CRISPR screens"/>
</dbReference>
<dbReference type="ChiTaRS" id="Atrx">
    <property type="organism name" value="mouse"/>
</dbReference>
<dbReference type="PRO" id="PR:Q61687"/>
<dbReference type="Proteomes" id="UP000000589">
    <property type="component" value="Chromosome X"/>
</dbReference>
<dbReference type="RNAct" id="Q61687">
    <property type="molecule type" value="protein"/>
</dbReference>
<dbReference type="Bgee" id="ENSMUSG00000031229">
    <property type="expression patterns" value="Expressed in metanephric cortical collecting duct and 251 other cell types or tissues"/>
</dbReference>
<dbReference type="ExpressionAtlas" id="Q61687">
    <property type="expression patterns" value="baseline and differential"/>
</dbReference>
<dbReference type="GO" id="GO:0099115">
    <property type="term" value="C:chromosome, subtelomeric region"/>
    <property type="evidence" value="ECO:0007669"/>
    <property type="project" value="Ensembl"/>
</dbReference>
<dbReference type="GO" id="GO:0000781">
    <property type="term" value="C:chromosome, telomeric region"/>
    <property type="evidence" value="ECO:0000314"/>
    <property type="project" value="BHF-UCL"/>
</dbReference>
<dbReference type="GO" id="GO:0000779">
    <property type="term" value="C:condensed chromosome, centromeric region"/>
    <property type="evidence" value="ECO:0000314"/>
    <property type="project" value="MGI"/>
</dbReference>
<dbReference type="GO" id="GO:0000792">
    <property type="term" value="C:heterochromatin"/>
    <property type="evidence" value="ECO:0000314"/>
    <property type="project" value="MGI"/>
</dbReference>
<dbReference type="GO" id="GO:0000228">
    <property type="term" value="C:nuclear chromosome"/>
    <property type="evidence" value="ECO:0000314"/>
    <property type="project" value="MGI"/>
</dbReference>
<dbReference type="GO" id="GO:0005634">
    <property type="term" value="C:nucleus"/>
    <property type="evidence" value="ECO:0000314"/>
    <property type="project" value="MGI"/>
</dbReference>
<dbReference type="GO" id="GO:0005721">
    <property type="term" value="C:pericentric heterochromatin"/>
    <property type="evidence" value="ECO:0000314"/>
    <property type="project" value="BHF-UCL"/>
</dbReference>
<dbReference type="GO" id="GO:0016605">
    <property type="term" value="C:PML body"/>
    <property type="evidence" value="ECO:0000314"/>
    <property type="project" value="BHF-UCL"/>
</dbReference>
<dbReference type="GO" id="GO:0005524">
    <property type="term" value="F:ATP binding"/>
    <property type="evidence" value="ECO:0007669"/>
    <property type="project" value="UniProtKB-KW"/>
</dbReference>
<dbReference type="GO" id="GO:0016887">
    <property type="term" value="F:ATP hydrolysis activity"/>
    <property type="evidence" value="ECO:0007669"/>
    <property type="project" value="RHEA"/>
</dbReference>
<dbReference type="GO" id="GO:0003682">
    <property type="term" value="F:chromatin binding"/>
    <property type="evidence" value="ECO:0000314"/>
    <property type="project" value="MGI"/>
</dbReference>
<dbReference type="GO" id="GO:0070087">
    <property type="term" value="F:chromo shadow domain binding"/>
    <property type="evidence" value="ECO:0007669"/>
    <property type="project" value="Ensembl"/>
</dbReference>
<dbReference type="GO" id="GO:0003677">
    <property type="term" value="F:DNA binding"/>
    <property type="evidence" value="ECO:0007669"/>
    <property type="project" value="UniProtKB-KW"/>
</dbReference>
<dbReference type="GO" id="GO:0015616">
    <property type="term" value="F:DNA translocase activity"/>
    <property type="evidence" value="ECO:0007669"/>
    <property type="project" value="Ensembl"/>
</dbReference>
<dbReference type="GO" id="GO:0004386">
    <property type="term" value="F:helicase activity"/>
    <property type="evidence" value="ECO:0007669"/>
    <property type="project" value="UniProtKB-KW"/>
</dbReference>
<dbReference type="GO" id="GO:0042393">
    <property type="term" value="F:histone binding"/>
    <property type="evidence" value="ECO:0000314"/>
    <property type="project" value="UniProtKB"/>
</dbReference>
<dbReference type="GO" id="GO:0062072">
    <property type="term" value="F:histone H3K9me2/3 reader activity"/>
    <property type="evidence" value="ECO:0007669"/>
    <property type="project" value="Ensembl"/>
</dbReference>
<dbReference type="GO" id="GO:0008270">
    <property type="term" value="F:zinc ion binding"/>
    <property type="evidence" value="ECO:0007669"/>
    <property type="project" value="UniProtKB-KW"/>
</dbReference>
<dbReference type="GO" id="GO:0072711">
    <property type="term" value="P:cellular response to hydroxyurea"/>
    <property type="evidence" value="ECO:0000315"/>
    <property type="project" value="UniProtKB"/>
</dbReference>
<dbReference type="GO" id="GO:0006325">
    <property type="term" value="P:chromatin organization"/>
    <property type="evidence" value="ECO:0000250"/>
    <property type="project" value="UniProtKB"/>
</dbReference>
<dbReference type="GO" id="GO:0006338">
    <property type="term" value="P:chromatin remodeling"/>
    <property type="evidence" value="ECO:0000250"/>
    <property type="project" value="UniProtKB"/>
</dbReference>
<dbReference type="GO" id="GO:0070192">
    <property type="term" value="P:chromosome organization involved in meiotic cell cycle"/>
    <property type="evidence" value="ECO:0000315"/>
    <property type="project" value="MGI"/>
</dbReference>
<dbReference type="GO" id="GO:0030330">
    <property type="term" value="P:DNA damage response, signal transduction by p53 class mediator"/>
    <property type="evidence" value="ECO:0000315"/>
    <property type="project" value="UniProtKB"/>
</dbReference>
<dbReference type="GO" id="GO:0006281">
    <property type="term" value="P:DNA repair"/>
    <property type="evidence" value="ECO:0007669"/>
    <property type="project" value="UniProtKB-KW"/>
</dbReference>
<dbReference type="GO" id="GO:0030900">
    <property type="term" value="P:forebrain development"/>
    <property type="evidence" value="ECO:0000315"/>
    <property type="project" value="MGI"/>
</dbReference>
<dbReference type="GO" id="GO:0000212">
    <property type="term" value="P:meiotic spindle organization"/>
    <property type="evidence" value="ECO:0000315"/>
    <property type="project" value="MGI"/>
</dbReference>
<dbReference type="GO" id="GO:0035264">
    <property type="term" value="P:multicellular organism growth"/>
    <property type="evidence" value="ECO:0000315"/>
    <property type="project" value="MGI"/>
</dbReference>
<dbReference type="GO" id="GO:1904908">
    <property type="term" value="P:negative regulation of maintenance of mitotic sister chromatid cohesion, telomeric"/>
    <property type="evidence" value="ECO:0007669"/>
    <property type="project" value="Ensembl"/>
</dbReference>
<dbReference type="GO" id="GO:0006334">
    <property type="term" value="P:nucleosome assembly"/>
    <property type="evidence" value="ECO:0000250"/>
    <property type="project" value="UniProtKB"/>
</dbReference>
<dbReference type="GO" id="GO:0010571">
    <property type="term" value="P:positive regulation of nuclear cell cycle DNA replication"/>
    <property type="evidence" value="ECO:0000315"/>
    <property type="project" value="UniProtKB"/>
</dbReference>
<dbReference type="GO" id="GO:0032206">
    <property type="term" value="P:positive regulation of telomere maintenance"/>
    <property type="evidence" value="ECO:0000315"/>
    <property type="project" value="UniProtKB"/>
</dbReference>
<dbReference type="GO" id="GO:0045944">
    <property type="term" value="P:positive regulation of transcription by RNA polymerase II"/>
    <property type="evidence" value="ECO:0000316"/>
    <property type="project" value="MGI"/>
</dbReference>
<dbReference type="GO" id="GO:0035128">
    <property type="term" value="P:post-embryonic forelimb morphogenesis"/>
    <property type="evidence" value="ECO:0000315"/>
    <property type="project" value="MGI"/>
</dbReference>
<dbReference type="GO" id="GO:0070198">
    <property type="term" value="P:protein localization to chromosome, telomeric region"/>
    <property type="evidence" value="ECO:0000315"/>
    <property type="project" value="BHF-UCL"/>
</dbReference>
<dbReference type="GO" id="GO:0031297">
    <property type="term" value="P:replication fork processing"/>
    <property type="evidence" value="ECO:0000315"/>
    <property type="project" value="UniProtKB"/>
</dbReference>
<dbReference type="GO" id="GO:0072520">
    <property type="term" value="P:seminiferous tubule development"/>
    <property type="evidence" value="ECO:0000315"/>
    <property type="project" value="MGI"/>
</dbReference>
<dbReference type="GO" id="GO:0060009">
    <property type="term" value="P:Sertoli cell development"/>
    <property type="evidence" value="ECO:0000315"/>
    <property type="project" value="MGI"/>
</dbReference>
<dbReference type="GO" id="GO:0007283">
    <property type="term" value="P:spermatogenesis"/>
    <property type="evidence" value="ECO:0000315"/>
    <property type="project" value="MGI"/>
</dbReference>
<dbReference type="GO" id="GO:0031509">
    <property type="term" value="P:subtelomeric heterochromatin formation"/>
    <property type="evidence" value="ECO:0000315"/>
    <property type="project" value="GO_Central"/>
</dbReference>
<dbReference type="GO" id="GO:0006366">
    <property type="term" value="P:transcription by RNA polymerase II"/>
    <property type="evidence" value="ECO:0000316"/>
    <property type="project" value="MGI"/>
</dbReference>
<dbReference type="CDD" id="cd11726">
    <property type="entry name" value="ADDz_ATRX"/>
    <property type="match status" value="1"/>
</dbReference>
<dbReference type="CDD" id="cd18068">
    <property type="entry name" value="DEXHc_ATRX"/>
    <property type="match status" value="1"/>
</dbReference>
<dbReference type="CDD" id="cd18793">
    <property type="entry name" value="SF2_C_SNF"/>
    <property type="match status" value="1"/>
</dbReference>
<dbReference type="FunFam" id="3.40.50.10810:FF:000011">
    <property type="entry name" value="Transcriptional regulator ATRX homolog"/>
    <property type="match status" value="1"/>
</dbReference>
<dbReference type="FunFam" id="1.20.120.850:FF:000001">
    <property type="entry name" value="transcriptional regulator ATRX isoform X1"/>
    <property type="match status" value="1"/>
</dbReference>
<dbReference type="FunFam" id="3.30.40.10:FF:000091">
    <property type="entry name" value="transcriptional regulator ATRX isoform X1"/>
    <property type="match status" value="1"/>
</dbReference>
<dbReference type="FunFam" id="3.40.50.300:FF:000377">
    <property type="entry name" value="transcriptional regulator ATRX isoform X1"/>
    <property type="match status" value="1"/>
</dbReference>
<dbReference type="Gene3D" id="3.40.50.300">
    <property type="entry name" value="P-loop containing nucleotide triphosphate hydrolases"/>
    <property type="match status" value="2"/>
</dbReference>
<dbReference type="Gene3D" id="1.20.120.850">
    <property type="entry name" value="SWI2/SNF2 ATPases, N-terminal domain"/>
    <property type="match status" value="1"/>
</dbReference>
<dbReference type="Gene3D" id="3.40.50.10810">
    <property type="entry name" value="Tandem AAA-ATPase domain"/>
    <property type="match status" value="1"/>
</dbReference>
<dbReference type="Gene3D" id="3.30.40.10">
    <property type="entry name" value="Zinc/RING finger domain, C3HC4 (zinc finger)"/>
    <property type="match status" value="1"/>
</dbReference>
<dbReference type="InterPro" id="IPR025766">
    <property type="entry name" value="ADD"/>
</dbReference>
<dbReference type="InterPro" id="IPR041430">
    <property type="entry name" value="ADD_ATRX"/>
</dbReference>
<dbReference type="InterPro" id="IPR052131">
    <property type="entry name" value="ATRX_domain-containing"/>
</dbReference>
<dbReference type="InterPro" id="IPR014001">
    <property type="entry name" value="Helicase_ATP-bd"/>
</dbReference>
<dbReference type="InterPro" id="IPR001650">
    <property type="entry name" value="Helicase_C-like"/>
</dbReference>
<dbReference type="InterPro" id="IPR027417">
    <property type="entry name" value="P-loop_NTPase"/>
</dbReference>
<dbReference type="InterPro" id="IPR038718">
    <property type="entry name" value="SNF2-like_sf"/>
</dbReference>
<dbReference type="InterPro" id="IPR049730">
    <property type="entry name" value="SNF2/RAD54-like_C"/>
</dbReference>
<dbReference type="InterPro" id="IPR000330">
    <property type="entry name" value="SNF2_N"/>
</dbReference>
<dbReference type="InterPro" id="IPR011011">
    <property type="entry name" value="Znf_FYVE_PHD"/>
</dbReference>
<dbReference type="InterPro" id="IPR013083">
    <property type="entry name" value="Znf_RING/FYVE/PHD"/>
</dbReference>
<dbReference type="PANTHER" id="PTHR46357">
    <property type="entry name" value="TRANSCRIPTIONAL REGULATOR ATRX"/>
    <property type="match status" value="1"/>
</dbReference>
<dbReference type="PANTHER" id="PTHR46357:SF1">
    <property type="entry name" value="TRANSCRIPTIONAL REGULATOR ATRX"/>
    <property type="match status" value="1"/>
</dbReference>
<dbReference type="Pfam" id="PF17981">
    <property type="entry name" value="ADD_ATRX"/>
    <property type="match status" value="1"/>
</dbReference>
<dbReference type="Pfam" id="PF00271">
    <property type="entry name" value="Helicase_C"/>
    <property type="match status" value="1"/>
</dbReference>
<dbReference type="Pfam" id="PF00176">
    <property type="entry name" value="SNF2-rel_dom"/>
    <property type="match status" value="1"/>
</dbReference>
<dbReference type="SMART" id="SM00487">
    <property type="entry name" value="DEXDc"/>
    <property type="match status" value="1"/>
</dbReference>
<dbReference type="SMART" id="SM00490">
    <property type="entry name" value="HELICc"/>
    <property type="match status" value="1"/>
</dbReference>
<dbReference type="SUPFAM" id="SSF57903">
    <property type="entry name" value="FYVE/PHD zinc finger"/>
    <property type="match status" value="1"/>
</dbReference>
<dbReference type="SUPFAM" id="SSF52540">
    <property type="entry name" value="P-loop containing nucleoside triphosphate hydrolases"/>
    <property type="match status" value="2"/>
</dbReference>
<dbReference type="PROSITE" id="PS51533">
    <property type="entry name" value="ADD"/>
    <property type="match status" value="1"/>
</dbReference>
<dbReference type="PROSITE" id="PS51192">
    <property type="entry name" value="HELICASE_ATP_BIND_1"/>
    <property type="match status" value="1"/>
</dbReference>
<dbReference type="PROSITE" id="PS51194">
    <property type="entry name" value="HELICASE_CTER"/>
    <property type="match status" value="1"/>
</dbReference>
<organism>
    <name type="scientific">Mus musculus</name>
    <name type="common">Mouse</name>
    <dbReference type="NCBI Taxonomy" id="10090"/>
    <lineage>
        <taxon>Eukaryota</taxon>
        <taxon>Metazoa</taxon>
        <taxon>Chordata</taxon>
        <taxon>Craniata</taxon>
        <taxon>Vertebrata</taxon>
        <taxon>Euteleostomi</taxon>
        <taxon>Mammalia</taxon>
        <taxon>Eutheria</taxon>
        <taxon>Euarchontoglires</taxon>
        <taxon>Glires</taxon>
        <taxon>Rodentia</taxon>
        <taxon>Myomorpha</taxon>
        <taxon>Muroidea</taxon>
        <taxon>Muridae</taxon>
        <taxon>Murinae</taxon>
        <taxon>Mus</taxon>
        <taxon>Mus</taxon>
    </lineage>
</organism>
<name>ATRX_MOUSE</name>
<reference key="1">
    <citation type="journal article" date="1998" name="Mamm. Genome">
        <title>Comparison of the human and murine ATRX gene identifies highly conserved, functionally important domains.</title>
        <authorList>
            <person name="Picketts D.J."/>
            <person name="Tastan A.O."/>
            <person name="Higgs D.R."/>
            <person name="Gibbons R.J."/>
        </authorList>
    </citation>
    <scope>NUCLEOTIDE SEQUENCE [MRNA]</scope>
</reference>
<reference key="2">
    <citation type="journal article" date="2009" name="PLoS Biol.">
        <title>Lineage-specific biology revealed by a finished genome assembly of the mouse.</title>
        <authorList>
            <person name="Church D.M."/>
            <person name="Goodstadt L."/>
            <person name="Hillier L.W."/>
            <person name="Zody M.C."/>
            <person name="Goldstein S."/>
            <person name="She X."/>
            <person name="Bult C.J."/>
            <person name="Agarwala R."/>
            <person name="Cherry J.L."/>
            <person name="DiCuccio M."/>
            <person name="Hlavina W."/>
            <person name="Kapustin Y."/>
            <person name="Meric P."/>
            <person name="Maglott D."/>
            <person name="Birtle Z."/>
            <person name="Marques A.C."/>
            <person name="Graves T."/>
            <person name="Zhou S."/>
            <person name="Teague B."/>
            <person name="Potamousis K."/>
            <person name="Churas C."/>
            <person name="Place M."/>
            <person name="Herschleb J."/>
            <person name="Runnheim R."/>
            <person name="Forrest D."/>
            <person name="Amos-Landgraf J."/>
            <person name="Schwartz D.C."/>
            <person name="Cheng Z."/>
            <person name="Lindblad-Toh K."/>
            <person name="Eichler E.E."/>
            <person name="Ponting C.P."/>
        </authorList>
    </citation>
    <scope>NUCLEOTIDE SEQUENCE [LARGE SCALE GENOMIC DNA]</scope>
    <source>
        <strain>C57BL/6J</strain>
    </source>
</reference>
<reference key="3">
    <citation type="journal article" date="1996" name="EMBO J.">
        <title>A possible involvement of TIF1 alpha and TIF1 beta in the epigenetic control of transcription by nuclear receptors.</title>
        <authorList>
            <person name="le Douarin B."/>
            <person name="Nielsen A.L."/>
            <person name="Garnier J.-M."/>
            <person name="Ichinose H."/>
            <person name="Jeanmougin F."/>
            <person name="Losson R."/>
            <person name="Chambon P."/>
        </authorList>
    </citation>
    <scope>NUCLEOTIDE SEQUENCE [MRNA] OF 325-1176</scope>
</reference>
<reference key="4">
    <citation type="journal article" date="1999" name="Proc. Natl. Acad. Sci. U.S.A.">
        <title>Localization of a putative transcriptional regulator (ATRX) at pericentromeric heterochromatin and the short arms of acrocentric chromosomes.</title>
        <authorList>
            <person name="McDowell T.L."/>
            <person name="Gibbons R.J."/>
            <person name="Sutherland H."/>
            <person name="O'Rourke D.M."/>
            <person name="Bickmore W.A."/>
            <person name="Pombo A."/>
            <person name="Turley H."/>
            <person name="Gatter K."/>
            <person name="Picketts D.J."/>
            <person name="Buckle V.J."/>
            <person name="Chapman L."/>
            <person name="Rhodes D."/>
            <person name="Higgs D.R."/>
        </authorList>
    </citation>
    <scope>SUBCELLULAR LOCATION</scope>
    <scope>ASSOCIATION WITH PERICENTROMERIC HETEROCHROMATIN</scope>
</reference>
<reference key="5">
    <citation type="journal article" date="2007" name="Proc. Natl. Acad. Sci. U.S.A.">
        <title>Large-scale phosphorylation analysis of mouse liver.</title>
        <authorList>
            <person name="Villen J."/>
            <person name="Beausoleil S.A."/>
            <person name="Gerber S.A."/>
            <person name="Gygi S.P."/>
        </authorList>
    </citation>
    <scope>PHOSPHORYLATION [LARGE SCALE ANALYSIS] AT TYR-89; SER-717; SER-801 AND SER-1339</scope>
    <scope>IDENTIFICATION BY MASS SPECTROMETRY [LARGE SCALE ANALYSIS]</scope>
    <source>
        <tissue>Liver</tissue>
    </source>
</reference>
<reference key="6">
    <citation type="journal article" date="2007" name="Proc. Natl. Acad. Sci. U.S.A.">
        <title>Interaction between chromatin proteins MECP2 and ATRX is disrupted by mutations that cause inherited mental retardation.</title>
        <authorList>
            <person name="Nan X."/>
            <person name="Hou J."/>
            <person name="Maclean A."/>
            <person name="Nasir J."/>
            <person name="Lafuente M.J."/>
            <person name="Shu X."/>
            <person name="Kriaucionis S."/>
            <person name="Bird A."/>
        </authorList>
    </citation>
    <scope>INTERACTION WITH MECP2</scope>
</reference>
<reference key="7">
    <citation type="journal article" date="2009" name="Immunity">
        <title>The phagosomal proteome in interferon-gamma-activated macrophages.</title>
        <authorList>
            <person name="Trost M."/>
            <person name="English L."/>
            <person name="Lemieux S."/>
            <person name="Courcelles M."/>
            <person name="Desjardins M."/>
            <person name="Thibault P."/>
        </authorList>
    </citation>
    <scope>PHOSPHORYLATION [LARGE SCALE ANALYSIS] AT SER-92</scope>
    <scope>IDENTIFICATION BY MASS SPECTROMETRY [LARGE SCALE ANALYSIS]</scope>
</reference>
<reference key="8">
    <citation type="journal article" date="2009" name="Mol. Cell. Proteomics">
        <title>Large scale localization of protein phosphorylation by use of electron capture dissociation mass spectrometry.</title>
        <authorList>
            <person name="Sweet S.M."/>
            <person name="Bailey C.M."/>
            <person name="Cunningham D.L."/>
            <person name="Heath J.K."/>
            <person name="Cooper H.J."/>
        </authorList>
    </citation>
    <scope>PHOSPHORYLATION [LARGE SCALE ANALYSIS] AT SER-92</scope>
    <scope>IDENTIFICATION BY MASS SPECTROMETRY [LARGE SCALE ANALYSIS]</scope>
    <source>
        <tissue>Embryonic fibroblast</tissue>
    </source>
</reference>
<reference key="9">
    <citation type="journal article" date="2010" name="Cell">
        <title>A tissue-specific atlas of mouse protein phosphorylation and expression.</title>
        <authorList>
            <person name="Huttlin E.L."/>
            <person name="Jedrychowski M.P."/>
            <person name="Elias J.E."/>
            <person name="Goswami T."/>
            <person name="Rad R."/>
            <person name="Beausoleil S.A."/>
            <person name="Villen J."/>
            <person name="Haas W."/>
            <person name="Sowa M.E."/>
            <person name="Gygi S.P."/>
        </authorList>
    </citation>
    <scope>PHOSPHORYLATION [LARGE SCALE ANALYSIS] AT TYR-89; SER-92; SER-212; SER-315; SER-626; SER-663; SER-665; SER-717; SER-766; SER-801; SER-854; SER-855; SER-1223; SER-1224; SER-1232; SER-1339; SER-1891; SER-1898; SER-1975 AND SER-1979</scope>
    <scope>IDENTIFICATION BY MASS SPECTROMETRY [LARGE SCALE ANALYSIS]</scope>
    <source>
        <tissue>Brain</tissue>
        <tissue>Brown adipose tissue</tissue>
        <tissue>Heart</tissue>
        <tissue>Kidney</tissue>
        <tissue>Liver</tissue>
        <tissue>Lung</tissue>
        <tissue>Pancreas</tissue>
        <tissue>Spleen</tissue>
        <tissue>Testis</tissue>
    </source>
</reference>
<reference key="10">
    <citation type="journal article" date="2010" name="Cell">
        <title>ATR-X syndrome protein targets tandem repeats and influences allele-specific expression in a size-dependent manner.</title>
        <authorList>
            <person name="Law M.J."/>
            <person name="Lower K.M."/>
            <person name="Voon H.P."/>
            <person name="Hughes J.R."/>
            <person name="Garrick D."/>
            <person name="Viprakasit V."/>
            <person name="Mitson M."/>
            <person name="De Gobbi M."/>
            <person name="Marra M."/>
            <person name="Morris A."/>
            <person name="Abbott A."/>
            <person name="Wilder S.P."/>
            <person name="Taylor S."/>
            <person name="Santos G.M."/>
            <person name="Cross J."/>
            <person name="Ayyub H."/>
            <person name="Jones S."/>
            <person name="Ragoussis J."/>
            <person name="Rhodes D."/>
            <person name="Dunham I."/>
            <person name="Higgs D.R."/>
            <person name="Gibbons R.J."/>
        </authorList>
    </citation>
    <scope>FUNCTION</scope>
    <scope>SUBCELLULAR LOCATION</scope>
</reference>
<reference key="11">
    <citation type="journal article" date="2010" name="Cell">
        <title>Distinct factors control histone variant H3.3 localization at specific genomic regions.</title>
        <authorList>
            <person name="Goldberg A.D."/>
            <person name="Banaszynski L.A."/>
            <person name="Noh K.M."/>
            <person name="Lewis P.W."/>
            <person name="Elsaesser S.J."/>
            <person name="Stadler S."/>
            <person name="Dewell S."/>
            <person name="Law M."/>
            <person name="Guo X."/>
            <person name="Li X."/>
            <person name="Wen D."/>
            <person name="Chapgier A."/>
            <person name="DeKelver R.C."/>
            <person name="Miller J.C."/>
            <person name="Lee Y.L."/>
            <person name="Boydston E.A."/>
            <person name="Holmes M.C."/>
            <person name="Gregory P.D."/>
            <person name="Greally J.M."/>
            <person name="Rafii S."/>
            <person name="Yang C."/>
            <person name="Scambler P.J."/>
            <person name="Garrick D."/>
            <person name="Gibbons R.J."/>
            <person name="Higgs D.R."/>
            <person name="Cristea I.M."/>
            <person name="Urnov F.D."/>
            <person name="Zheng D."/>
            <person name="Allis C.D."/>
        </authorList>
    </citation>
    <scope>FUNCTION</scope>
    <scope>ASSOCIATION WITH HISTONE H3.3</scope>
</reference>
<reference key="12">
    <citation type="journal article" date="2010" name="Genes Dev.">
        <title>The death-associated protein DAXX is a novel histone chaperone involved in the replication-independent deposition of H3.3.</title>
        <authorList>
            <person name="Drane P."/>
            <person name="Ouararhni K."/>
            <person name="Depaux A."/>
            <person name="Shuaib M."/>
            <person name="Hamiche A."/>
        </authorList>
    </citation>
    <scope>ASSOCIATION WITH HISTONE H3.3</scope>
</reference>
<reference key="13">
    <citation type="journal article" date="2011" name="Nat. Struct. Mol. Biol.">
        <title>Combinatorial readout of histone H3 modifications specifies localization of ATRX to heterochromatin.</title>
        <authorList>
            <person name="Eustermann S."/>
            <person name="Yang J.C."/>
            <person name="Law M.J."/>
            <person name="Amos R."/>
            <person name="Chapman L.M."/>
            <person name="Jelinska C."/>
            <person name="Garrick D."/>
            <person name="Clynes D."/>
            <person name="Gibbons R.J."/>
            <person name="Rhodes D."/>
            <person name="Higgs D.R."/>
            <person name="Neuhaus D."/>
        </authorList>
    </citation>
    <scope>SUBCELLULAR LOCATION</scope>
    <scope>MUTAGENESIS OF CYS-239 AND VAL-580</scope>
</reference>
<reference key="14">
    <citation type="journal article" date="2014" name="Mol. Cell. Proteomics">
        <title>Immunoaffinity enrichment and mass spectrometry analysis of protein methylation.</title>
        <authorList>
            <person name="Guo A."/>
            <person name="Gu H."/>
            <person name="Zhou J."/>
            <person name="Mulhern D."/>
            <person name="Wang Y."/>
            <person name="Lee K.A."/>
            <person name="Yang V."/>
            <person name="Aguiar M."/>
            <person name="Kornhauser J."/>
            <person name="Jia X."/>
            <person name="Ren J."/>
            <person name="Beausoleil S.A."/>
            <person name="Silva J.C."/>
            <person name="Vemulapalli V."/>
            <person name="Bedford M.T."/>
            <person name="Comb M.J."/>
        </authorList>
    </citation>
    <scope>METHYLATION [LARGE SCALE ANALYSIS] AT ARG-2457 AND ARG-2464</scope>
    <scope>IDENTIFICATION BY MASS SPECTROMETRY [LARGE SCALE ANALYSIS]</scope>
    <source>
        <tissue>Brain</tissue>
        <tissue>Embryo</tissue>
    </source>
</reference>
<reference key="15">
    <citation type="journal article" date="2014" name="Nature">
        <title>Citrullination regulates pluripotency and histone H1 binding to chromatin.</title>
        <authorList>
            <person name="Christophorou M.A."/>
            <person name="Castelo-Branco G."/>
            <person name="Halley-Stott R.P."/>
            <person name="Oliveira C.S."/>
            <person name="Loos R."/>
            <person name="Radzisheuskaya A."/>
            <person name="Mowen K.A."/>
            <person name="Bertone P."/>
            <person name="Silva J.C."/>
            <person name="Zernicka-Goetz M."/>
            <person name="Nielsen M.L."/>
            <person name="Gurdon J.B."/>
            <person name="Kouzarides T."/>
        </authorList>
    </citation>
    <scope>CITRULLINATION AT ARG-1063</scope>
</reference>
<reference key="16">
    <citation type="journal article" date="2010" name="Dev. Cell">
        <title>ATRX partners with cohesin and MeCP2 and contributes to developmental silencing of imprinted genes in the brain.</title>
        <authorList>
            <person name="Kernohan K.D."/>
            <person name="Jiang Y."/>
            <person name="Tremblay D.C."/>
            <person name="Bonvissuto A.C."/>
            <person name="Eubanks J.H."/>
            <person name="Mann M.R."/>
            <person name="Berube N.G."/>
        </authorList>
    </citation>
    <scope>INTERACTION WITH MECP2; SMC1 AND SMC3</scope>
</reference>
<reference key="17">
    <citation type="journal article" date="2010" name="Genome Res.">
        <title>ATRX interacts with H3.3 in maintaining telomere structural integrity in pluripotent embryonic stem cells.</title>
        <authorList>
            <person name="Wong L.H."/>
            <person name="McGhie J.D."/>
            <person name="Sim M."/>
            <person name="Anderson M.A."/>
            <person name="Ahn S."/>
            <person name="Hannan R.D."/>
            <person name="George A.J."/>
            <person name="Morgan K.A."/>
            <person name="Mann J.R."/>
            <person name="Choo K.H."/>
        </authorList>
    </citation>
    <scope>FUNCTION</scope>
    <scope>SUBCELLULAR LOCATION</scope>
    <scope>INTERACTION WITH HISTONE H3.3</scope>
</reference>
<reference key="18">
    <citation type="journal article" date="2014" name="PLoS ONE">
        <title>ATRX dysfunction induces replication defects in primary mouse cells.</title>
        <authorList>
            <person name="Clynes D."/>
            <person name="Jelinska C."/>
            <person name="Xella B."/>
            <person name="Ayyub H."/>
            <person name="Taylor S."/>
            <person name="Mitson M."/>
            <person name="Bachrati C.Z."/>
            <person name="Higgs D.R."/>
            <person name="Gibbons R.J."/>
        </authorList>
    </citation>
    <scope>FUNCTION</scope>
    <scope>INTERACTION WITH RAD50; MRE11 AND NBN</scope>
</reference>